<name>MALE_ECO57</name>
<reference key="1">
    <citation type="journal article" date="2001" name="Nature">
        <title>Genome sequence of enterohaemorrhagic Escherichia coli O157:H7.</title>
        <authorList>
            <person name="Perna N.T."/>
            <person name="Plunkett G. III"/>
            <person name="Burland V."/>
            <person name="Mau B."/>
            <person name="Glasner J.D."/>
            <person name="Rose D.J."/>
            <person name="Mayhew G.F."/>
            <person name="Evans P.S."/>
            <person name="Gregor J."/>
            <person name="Kirkpatrick H.A."/>
            <person name="Posfai G."/>
            <person name="Hackett J."/>
            <person name="Klink S."/>
            <person name="Boutin A."/>
            <person name="Shao Y."/>
            <person name="Miller L."/>
            <person name="Grotbeck E.J."/>
            <person name="Davis N.W."/>
            <person name="Lim A."/>
            <person name="Dimalanta E.T."/>
            <person name="Potamousis K."/>
            <person name="Apodaca J."/>
            <person name="Anantharaman T.S."/>
            <person name="Lin J."/>
            <person name="Yen G."/>
            <person name="Schwartz D.C."/>
            <person name="Welch R.A."/>
            <person name="Blattner F.R."/>
        </authorList>
    </citation>
    <scope>NUCLEOTIDE SEQUENCE [LARGE SCALE GENOMIC DNA]</scope>
    <source>
        <strain>O157:H7 / EDL933 / ATCC 700927 / EHEC</strain>
    </source>
</reference>
<reference key="2">
    <citation type="journal article" date="2001" name="DNA Res.">
        <title>Complete genome sequence of enterohemorrhagic Escherichia coli O157:H7 and genomic comparison with a laboratory strain K-12.</title>
        <authorList>
            <person name="Hayashi T."/>
            <person name="Makino K."/>
            <person name="Ohnishi M."/>
            <person name="Kurokawa K."/>
            <person name="Ishii K."/>
            <person name="Yokoyama K."/>
            <person name="Han C.-G."/>
            <person name="Ohtsubo E."/>
            <person name="Nakayama K."/>
            <person name="Murata T."/>
            <person name="Tanaka M."/>
            <person name="Tobe T."/>
            <person name="Iida T."/>
            <person name="Takami H."/>
            <person name="Honda T."/>
            <person name="Sasakawa C."/>
            <person name="Ogasawara N."/>
            <person name="Yasunaga T."/>
            <person name="Kuhara S."/>
            <person name="Shiba T."/>
            <person name="Hattori M."/>
            <person name="Shinagawa H."/>
        </authorList>
    </citation>
    <scope>NUCLEOTIDE SEQUENCE [LARGE SCALE GENOMIC DNA]</scope>
    <source>
        <strain>O157:H7 / Sakai / RIMD 0509952 / EHEC</strain>
    </source>
</reference>
<protein>
    <recommendedName>
        <fullName evidence="2">Maltose/maltodextrin-binding periplasmic protein</fullName>
    </recommendedName>
    <alternativeName>
        <fullName evidence="2">MMBP</fullName>
    </alternativeName>
    <alternativeName>
        <fullName evidence="2">Maltodextrin-binding protein</fullName>
    </alternativeName>
    <alternativeName>
        <fullName evidence="2">Maltose-binding protein</fullName>
        <shortName evidence="2">MBP</shortName>
    </alternativeName>
</protein>
<comment type="function">
    <text evidence="2">Part of the ABC transporter complex MalEFGK involved in maltose/maltodextrin import. Binds maltose and higher maltodextrins.</text>
</comment>
<comment type="subunit">
    <text evidence="2">The complex is composed of two ATP-binding proteins (MalK), two transmembrane proteins (MalG and MalF) and a solute-binding protein (MalE).</text>
</comment>
<comment type="subcellular location">
    <subcellularLocation>
        <location evidence="2">Periplasm</location>
    </subcellularLocation>
</comment>
<comment type="similarity">
    <text evidence="3">Belongs to the bacterial solute-binding protein 1 family.</text>
</comment>
<keyword id="KW-0002">3D-structure</keyword>
<keyword id="KW-0574">Periplasm</keyword>
<keyword id="KW-1185">Reference proteome</keyword>
<keyword id="KW-0732">Signal</keyword>
<keyword id="KW-0762">Sugar transport</keyword>
<keyword id="KW-0813">Transport</keyword>
<sequence length="396" mass="43388">MKIKTGARILALSALTTMMFSASALAKIEEGKLVIWINGDKGYNGLAEVGKKFEKDTGIKVTVEHPDKLEEKFPQVAATGDGPDIIFWAHDRFGGYAQSGLLAEITPDKAFQDKLYPFTWDAVRYNGKLIAYPIAVEALSLIYNKDLLPNPPKTWEEIPALDKELKAKGKSALMFNLQEPYFTWPLIAADGGYAFKYENGKYDIKDVGVDNAGAKAGLTFLVDLIKNKHMNADTDYSIAEAAFNKGETAMTINGPWAWSNIDTSKVNYGVTVLPTFKGQPSKPFVGVLSAGINAASPNKELAKEFLENYLLTDEGLEAVNKDKPLGAVALKSYEEELAKDPRIAATMENAQKGEIMPNIPQMSAFWYAVRTAVINAASGRQTVDEALKDAQTRITK</sequence>
<proteinExistence type="evidence at protein level"/>
<gene>
    <name type="primary">malE</name>
    <name type="ordered locus">Z5632</name>
    <name type="ordered locus">ECs5017</name>
</gene>
<dbReference type="EMBL" id="AE005174">
    <property type="protein sequence ID" value="AAG59233.1"/>
    <property type="molecule type" value="Genomic_DNA"/>
</dbReference>
<dbReference type="EMBL" id="BA000007">
    <property type="protein sequence ID" value="BAB38440.1"/>
    <property type="molecule type" value="Genomic_DNA"/>
</dbReference>
<dbReference type="PIR" id="A98256">
    <property type="entry name" value="A98256"/>
</dbReference>
<dbReference type="PIR" id="E86096">
    <property type="entry name" value="E86096"/>
</dbReference>
<dbReference type="RefSeq" id="NP_313044.1">
    <property type="nucleotide sequence ID" value="NC_002695.1"/>
</dbReference>
<dbReference type="RefSeq" id="WP_000695387.1">
    <property type="nucleotide sequence ID" value="NZ_VOAI01000027.1"/>
</dbReference>
<dbReference type="PDB" id="3VD8">
    <property type="method" value="X-ray"/>
    <property type="resolution" value="2.07 A"/>
    <property type="chains" value="A=27-384"/>
</dbReference>
<dbReference type="PDB" id="4MY2">
    <property type="method" value="X-ray"/>
    <property type="resolution" value="2.40 A"/>
    <property type="chains" value="A=26-392"/>
</dbReference>
<dbReference type="PDB" id="4WGI">
    <property type="method" value="X-ray"/>
    <property type="resolution" value="1.85 A"/>
    <property type="chains" value="A=27-392"/>
</dbReference>
<dbReference type="PDB" id="4WVG">
    <property type="method" value="X-ray"/>
    <property type="resolution" value="2.05 A"/>
    <property type="chains" value="A=33-392"/>
</dbReference>
<dbReference type="PDB" id="4WVI">
    <property type="method" value="X-ray"/>
    <property type="resolution" value="1.90 A"/>
    <property type="chains" value="A=33-392"/>
</dbReference>
<dbReference type="PDB" id="4WVJ">
    <property type="method" value="X-ray"/>
    <property type="resolution" value="1.95 A"/>
    <property type="chains" value="A=33-392"/>
</dbReference>
<dbReference type="PDB" id="4XAI">
    <property type="method" value="X-ray"/>
    <property type="resolution" value="2.60 A"/>
    <property type="chains" value="A/B=27-392"/>
</dbReference>
<dbReference type="PDB" id="4XAJ">
    <property type="method" value="X-ray"/>
    <property type="resolution" value="3.55 A"/>
    <property type="chains" value="A/B/C/D=26-392"/>
</dbReference>
<dbReference type="PDB" id="4YS9">
    <property type="method" value="X-ray"/>
    <property type="resolution" value="2.00 A"/>
    <property type="chains" value="B=27-392"/>
</dbReference>
<dbReference type="PDB" id="5CL1">
    <property type="method" value="X-ray"/>
    <property type="resolution" value="3.80 A"/>
    <property type="chains" value="A/B=26-392"/>
</dbReference>
<dbReference type="PDB" id="5E7U">
    <property type="method" value="X-ray"/>
    <property type="resolution" value="2.80 A"/>
    <property type="chains" value="A=27-392"/>
</dbReference>
<dbReference type="PDB" id="5JON">
    <property type="method" value="X-ray"/>
    <property type="resolution" value="2.04 A"/>
    <property type="chains" value="A/B=27-392"/>
</dbReference>
<dbReference type="PDB" id="5LOF">
    <property type="method" value="X-ray"/>
    <property type="resolution" value="2.20 A"/>
    <property type="chains" value="A=27-392"/>
</dbReference>
<dbReference type="PDBsum" id="3VD8"/>
<dbReference type="PDBsum" id="4MY2"/>
<dbReference type="PDBsum" id="4WGI"/>
<dbReference type="PDBsum" id="4WVG"/>
<dbReference type="PDBsum" id="4WVI"/>
<dbReference type="PDBsum" id="4WVJ"/>
<dbReference type="PDBsum" id="4XAI"/>
<dbReference type="PDBsum" id="4XAJ"/>
<dbReference type="PDBsum" id="4YS9"/>
<dbReference type="PDBsum" id="5CL1"/>
<dbReference type="PDBsum" id="5E7U"/>
<dbReference type="PDBsum" id="5JON"/>
<dbReference type="PDBsum" id="5LOF"/>
<dbReference type="BMRB" id="P0AEY0"/>
<dbReference type="EMDB" id="EMD-4039"/>
<dbReference type="EMDB" id="EMD-40983"/>
<dbReference type="SMR" id="P0AEY0"/>
<dbReference type="IntAct" id="P0AEY0">
    <property type="interactions" value="1"/>
</dbReference>
<dbReference type="MINT" id="P0AEY0"/>
<dbReference type="STRING" id="155864.Z5632"/>
<dbReference type="ABCD" id="P0AEY0">
    <property type="antibodies" value="7 sequenced antibodies"/>
</dbReference>
<dbReference type="GeneID" id="75204178"/>
<dbReference type="GeneID" id="914317"/>
<dbReference type="KEGG" id="ece:Z5632"/>
<dbReference type="KEGG" id="ecs:ECs_5017"/>
<dbReference type="PATRIC" id="fig|386585.9.peg.5240"/>
<dbReference type="eggNOG" id="COG2182">
    <property type="taxonomic scope" value="Bacteria"/>
</dbReference>
<dbReference type="HOGENOM" id="CLU_031285_17_0_6"/>
<dbReference type="OMA" id="WAHDWIG"/>
<dbReference type="BRENDA" id="3.5.4.38">
    <property type="organism ID" value="12088"/>
</dbReference>
<dbReference type="Proteomes" id="UP000000558">
    <property type="component" value="Chromosome"/>
</dbReference>
<dbReference type="Proteomes" id="UP000002519">
    <property type="component" value="Chromosome"/>
</dbReference>
<dbReference type="GO" id="GO:0055052">
    <property type="term" value="C:ATP-binding cassette (ABC) transporter complex, substrate-binding subunit-containing"/>
    <property type="evidence" value="ECO:0007669"/>
    <property type="project" value="TreeGrafter"/>
</dbReference>
<dbReference type="GO" id="GO:0030288">
    <property type="term" value="C:outer membrane-bounded periplasmic space"/>
    <property type="evidence" value="ECO:0007669"/>
    <property type="project" value="UniProtKB-ARBA"/>
</dbReference>
<dbReference type="GO" id="GO:0015144">
    <property type="term" value="F:carbohydrate transmembrane transporter activity"/>
    <property type="evidence" value="ECO:0007669"/>
    <property type="project" value="InterPro"/>
</dbReference>
<dbReference type="GO" id="GO:1901982">
    <property type="term" value="F:maltose binding"/>
    <property type="evidence" value="ECO:0007669"/>
    <property type="project" value="TreeGrafter"/>
</dbReference>
<dbReference type="GO" id="GO:0042956">
    <property type="term" value="P:maltodextrin transmembrane transport"/>
    <property type="evidence" value="ECO:0007669"/>
    <property type="project" value="TreeGrafter"/>
</dbReference>
<dbReference type="GO" id="GO:0015768">
    <property type="term" value="P:maltose transport"/>
    <property type="evidence" value="ECO:0007669"/>
    <property type="project" value="TreeGrafter"/>
</dbReference>
<dbReference type="CDD" id="cd13656">
    <property type="entry name" value="PBP2_MBP"/>
    <property type="match status" value="1"/>
</dbReference>
<dbReference type="FunFam" id="3.40.190.10:FF:000032">
    <property type="entry name" value="Maltose/maltodextrin-binding periplasmic protein"/>
    <property type="match status" value="1"/>
</dbReference>
<dbReference type="Gene3D" id="3.40.190.10">
    <property type="entry name" value="Periplasmic binding protein-like II"/>
    <property type="match status" value="2"/>
</dbReference>
<dbReference type="InterPro" id="IPR006060">
    <property type="entry name" value="Maltose/Cyclodextrin-bd"/>
</dbReference>
<dbReference type="InterPro" id="IPR006059">
    <property type="entry name" value="SBP"/>
</dbReference>
<dbReference type="InterPro" id="IPR006061">
    <property type="entry name" value="SBP_1_CS"/>
</dbReference>
<dbReference type="NCBIfam" id="NF007011">
    <property type="entry name" value="PRK09474.1"/>
    <property type="match status" value="1"/>
</dbReference>
<dbReference type="PANTHER" id="PTHR30061">
    <property type="entry name" value="MALTOSE-BINDING PERIPLASMIC PROTEIN"/>
    <property type="match status" value="1"/>
</dbReference>
<dbReference type="PANTHER" id="PTHR30061:SF50">
    <property type="entry name" value="MALTOSE_MALTODEXTRIN-BINDING PERIPLASMIC PROTEIN"/>
    <property type="match status" value="1"/>
</dbReference>
<dbReference type="Pfam" id="PF01547">
    <property type="entry name" value="SBP_bac_1"/>
    <property type="match status" value="1"/>
</dbReference>
<dbReference type="PRINTS" id="PR00181">
    <property type="entry name" value="MALTOSEBP"/>
</dbReference>
<dbReference type="SUPFAM" id="SSF53850">
    <property type="entry name" value="Periplasmic binding protein-like II"/>
    <property type="match status" value="1"/>
</dbReference>
<dbReference type="PROSITE" id="PS01037">
    <property type="entry name" value="SBP_BACTERIAL_1"/>
    <property type="match status" value="1"/>
</dbReference>
<organism>
    <name type="scientific">Escherichia coli O157:H7</name>
    <dbReference type="NCBI Taxonomy" id="83334"/>
    <lineage>
        <taxon>Bacteria</taxon>
        <taxon>Pseudomonadati</taxon>
        <taxon>Pseudomonadota</taxon>
        <taxon>Gammaproteobacteria</taxon>
        <taxon>Enterobacterales</taxon>
        <taxon>Enterobacteriaceae</taxon>
        <taxon>Escherichia</taxon>
    </lineage>
</organism>
<accession>P0AEY0</accession>
<accession>P02928</accession>
<evidence type="ECO:0000250" key="1"/>
<evidence type="ECO:0000250" key="2">
    <source>
        <dbReference type="UniProtKB" id="P0AEX9"/>
    </source>
</evidence>
<evidence type="ECO:0000305" key="3"/>
<evidence type="ECO:0007829" key="4">
    <source>
        <dbReference type="PDB" id="4WGI"/>
    </source>
</evidence>
<evidence type="ECO:0007829" key="5">
    <source>
        <dbReference type="PDB" id="4XAI"/>
    </source>
</evidence>
<feature type="signal peptide" evidence="1">
    <location>
        <begin position="1"/>
        <end position="26"/>
    </location>
</feature>
<feature type="chain" id="PRO_0000044622" description="Maltose/maltodextrin-binding periplasmic protein">
    <location>
        <begin position="27"/>
        <end position="396"/>
    </location>
</feature>
<feature type="strand" evidence="4">
    <location>
        <begin position="33"/>
        <end position="36"/>
    </location>
</feature>
<feature type="helix" evidence="4">
    <location>
        <begin position="43"/>
        <end position="57"/>
    </location>
</feature>
<feature type="strand" evidence="4">
    <location>
        <begin position="61"/>
        <end position="64"/>
    </location>
</feature>
<feature type="helix" evidence="4">
    <location>
        <begin position="69"/>
        <end position="77"/>
    </location>
</feature>
<feature type="turn" evidence="4">
    <location>
        <begin position="78"/>
        <end position="80"/>
    </location>
</feature>
<feature type="strand" evidence="4">
    <location>
        <begin position="84"/>
        <end position="89"/>
    </location>
</feature>
<feature type="helix" evidence="4">
    <location>
        <begin position="90"/>
        <end position="92"/>
    </location>
</feature>
<feature type="helix" evidence="4">
    <location>
        <begin position="93"/>
        <end position="98"/>
    </location>
</feature>
<feature type="helix" evidence="4">
    <location>
        <begin position="109"/>
        <end position="112"/>
    </location>
</feature>
<feature type="helix" evidence="4">
    <location>
        <begin position="117"/>
        <end position="122"/>
    </location>
</feature>
<feature type="strand" evidence="4">
    <location>
        <begin position="131"/>
        <end position="137"/>
    </location>
</feature>
<feature type="strand" evidence="4">
    <location>
        <begin position="140"/>
        <end position="144"/>
    </location>
</feature>
<feature type="turn" evidence="4">
    <location>
        <begin position="145"/>
        <end position="147"/>
    </location>
</feature>
<feature type="helix" evidence="4">
    <location>
        <begin position="155"/>
        <end position="157"/>
    </location>
</feature>
<feature type="helix" evidence="4">
    <location>
        <begin position="158"/>
        <end position="166"/>
    </location>
</feature>
<feature type="turn" evidence="4">
    <location>
        <begin position="167"/>
        <end position="169"/>
    </location>
</feature>
<feature type="strand" evidence="4">
    <location>
        <begin position="171"/>
        <end position="173"/>
    </location>
</feature>
<feature type="strand" evidence="4">
    <location>
        <begin position="177"/>
        <end position="179"/>
    </location>
</feature>
<feature type="helix" evidence="4">
    <location>
        <begin position="180"/>
        <end position="182"/>
    </location>
</feature>
<feature type="helix" evidence="4">
    <location>
        <begin position="184"/>
        <end position="189"/>
    </location>
</feature>
<feature type="strand" evidence="4">
    <location>
        <begin position="193"/>
        <end position="195"/>
    </location>
</feature>
<feature type="strand" evidence="4">
    <location>
        <begin position="207"/>
        <end position="211"/>
    </location>
</feature>
<feature type="helix" evidence="4">
    <location>
        <begin position="212"/>
        <end position="226"/>
    </location>
</feature>
<feature type="helix" evidence="4">
    <location>
        <begin position="236"/>
        <end position="244"/>
    </location>
</feature>
<feature type="strand" evidence="4">
    <location>
        <begin position="247"/>
        <end position="253"/>
    </location>
</feature>
<feature type="helix" evidence="4">
    <location>
        <begin position="255"/>
        <end position="257"/>
    </location>
</feature>
<feature type="helix" evidence="4">
    <location>
        <begin position="258"/>
        <end position="264"/>
    </location>
</feature>
<feature type="strand" evidence="4">
    <location>
        <begin position="268"/>
        <end position="271"/>
    </location>
</feature>
<feature type="strand" evidence="4">
    <location>
        <begin position="284"/>
        <end position="293"/>
    </location>
</feature>
<feature type="helix" evidence="4">
    <location>
        <begin position="299"/>
        <end position="308"/>
    </location>
</feature>
<feature type="turn" evidence="5">
    <location>
        <begin position="309"/>
        <end position="311"/>
    </location>
</feature>
<feature type="helix" evidence="4">
    <location>
        <begin position="313"/>
        <end position="320"/>
    </location>
</feature>
<feature type="strand" evidence="4">
    <location>
        <begin position="327"/>
        <end position="330"/>
    </location>
</feature>
<feature type="helix" evidence="4">
    <location>
        <begin position="331"/>
        <end position="337"/>
    </location>
</feature>
<feature type="helix" evidence="4">
    <location>
        <begin position="341"/>
        <end position="352"/>
    </location>
</feature>
<feature type="strand" evidence="4">
    <location>
        <begin position="353"/>
        <end position="355"/>
    </location>
</feature>
<feature type="helix" evidence="4">
    <location>
        <begin position="362"/>
        <end position="377"/>
    </location>
</feature>
<feature type="helix" evidence="4">
    <location>
        <begin position="383"/>
        <end position="392"/>
    </location>
</feature>